<accession>Q08298</accession>
<accession>Q56WL9</accession>
<sequence length="392" mass="42260">MAIRLPLICLLGSFMVVAIAADLTPERYWSTALPNTPIPNSLHNLLTFDFTDEKSTNVQVGKGGVNVNTHKGKTGSGTAVNVGKGGVRVDTGKGKPGGGTHVSVGSGKGHGGGVAVHTGKPGKRTDVGVGKGGVTVHTRHKGRPIYVGVKPGANPFVYNYAAKETQLHDDPNAALFFLEKDLVRGKEMNVRFNAEDGYGGKTAFLPRGEAETVPFGSEKFSETLKRFSVEAGSEEAEMMKKTIEECEARKVSGEEKYCATSLESMVDFSVSKLGKYHVRAVSTEVAKKNAPMQKYKIAAAGVKKLSDDKSVVCHKQKYPFAVFYCHKAMMTTVYAVPLEGENGMRAKAVAVCHKNTSAWNPNHLAFKVLKVKPGTVPVCHFLPETHVVWFSY</sequence>
<organism>
    <name type="scientific">Arabidopsis thaliana</name>
    <name type="common">Mouse-ear cress</name>
    <dbReference type="NCBI Taxonomy" id="3702"/>
    <lineage>
        <taxon>Eukaryota</taxon>
        <taxon>Viridiplantae</taxon>
        <taxon>Streptophyta</taxon>
        <taxon>Embryophyta</taxon>
        <taxon>Tracheophyta</taxon>
        <taxon>Spermatophyta</taxon>
        <taxon>Magnoliopsida</taxon>
        <taxon>eudicotyledons</taxon>
        <taxon>Gunneridae</taxon>
        <taxon>Pentapetalae</taxon>
        <taxon>rosids</taxon>
        <taxon>malvids</taxon>
        <taxon>Brassicales</taxon>
        <taxon>Brassicaceae</taxon>
        <taxon>Camelineae</taxon>
        <taxon>Arabidopsis</taxon>
    </lineage>
</organism>
<keyword id="KW-1185">Reference proteome</keyword>
<keyword id="KW-0677">Repeat</keyword>
<keyword id="KW-0732">Signal</keyword>
<keyword id="KW-0346">Stress response</keyword>
<proteinExistence type="evidence at transcript level"/>
<protein>
    <recommendedName>
        <fullName evidence="8">BURP domain protein RD22</fullName>
    </recommendedName>
    <alternativeName>
        <fullName evidence="7">Dehydration-responsive protein RD22</fullName>
    </alternativeName>
</protein>
<evidence type="ECO:0000255" key="1"/>
<evidence type="ECO:0000255" key="2">
    <source>
        <dbReference type="PROSITE-ProRule" id="PRU00604"/>
    </source>
</evidence>
<evidence type="ECO:0000256" key="3">
    <source>
        <dbReference type="SAM" id="MobiDB-lite"/>
    </source>
</evidence>
<evidence type="ECO:0000269" key="4">
    <source>
    </source>
</evidence>
<evidence type="ECO:0000269" key="5">
    <source>
    </source>
</evidence>
<evidence type="ECO:0000269" key="6">
    <source>
    </source>
</evidence>
<evidence type="ECO:0000303" key="7">
    <source>
    </source>
</evidence>
<evidence type="ECO:0000303" key="8">
    <source>
    </source>
</evidence>
<evidence type="ECO:0000305" key="9"/>
<evidence type="ECO:0000305" key="10">
    <source>
    </source>
</evidence>
<evidence type="ECO:0000312" key="11">
    <source>
        <dbReference type="Araport" id="AT5G25610"/>
    </source>
</evidence>
<evidence type="ECO:0000312" key="12">
    <source>
        <dbReference type="EMBL" id="AC006601"/>
    </source>
</evidence>
<reference key="1">
    <citation type="journal article" date="1993" name="Mol. Gen. Genet.">
        <title>The plant hormone abscisic acid mediates the drought-induced expression but not the seed-specific expression of rd22, a gene responsive to dehydration stress in Arabidopsis thaliana.</title>
        <authorList>
            <person name="Yamaguchi-Shinozaki K."/>
            <person name="Shinozaki K."/>
        </authorList>
    </citation>
    <scope>NUCLEOTIDE SEQUENCE [GENOMIC DNA]</scope>
    <scope>TISSUE SPECIFICITY</scope>
    <scope>DEVELOPMENTAL STAGE</scope>
    <scope>INDUCTION</scope>
    <source>
        <strain>cv. Columbia</strain>
    </source>
</reference>
<reference key="2">
    <citation type="journal article" date="2000" name="Nature">
        <title>Sequence and analysis of chromosome 5 of the plant Arabidopsis thaliana.</title>
        <authorList>
            <person name="Tabata S."/>
            <person name="Kaneko T."/>
            <person name="Nakamura Y."/>
            <person name="Kotani H."/>
            <person name="Kato T."/>
            <person name="Asamizu E."/>
            <person name="Miyajima N."/>
            <person name="Sasamoto S."/>
            <person name="Kimura T."/>
            <person name="Hosouchi T."/>
            <person name="Kawashima K."/>
            <person name="Kohara M."/>
            <person name="Matsumoto M."/>
            <person name="Matsuno A."/>
            <person name="Muraki A."/>
            <person name="Nakayama S."/>
            <person name="Nakazaki N."/>
            <person name="Naruo K."/>
            <person name="Okumura S."/>
            <person name="Shinpo S."/>
            <person name="Takeuchi C."/>
            <person name="Wada T."/>
            <person name="Watanabe A."/>
            <person name="Yamada M."/>
            <person name="Yasuda M."/>
            <person name="Sato S."/>
            <person name="de la Bastide M."/>
            <person name="Huang E."/>
            <person name="Spiegel L."/>
            <person name="Gnoj L."/>
            <person name="O'Shaughnessy A."/>
            <person name="Preston R."/>
            <person name="Habermann K."/>
            <person name="Murray J."/>
            <person name="Johnson D."/>
            <person name="Rohlfing T."/>
            <person name="Nelson J."/>
            <person name="Stoneking T."/>
            <person name="Pepin K."/>
            <person name="Spieth J."/>
            <person name="Sekhon M."/>
            <person name="Armstrong J."/>
            <person name="Becker M."/>
            <person name="Belter E."/>
            <person name="Cordum H."/>
            <person name="Cordes M."/>
            <person name="Courtney L."/>
            <person name="Courtney W."/>
            <person name="Dante M."/>
            <person name="Du H."/>
            <person name="Edwards J."/>
            <person name="Fryman J."/>
            <person name="Haakensen B."/>
            <person name="Lamar E."/>
            <person name="Latreille P."/>
            <person name="Leonard S."/>
            <person name="Meyer R."/>
            <person name="Mulvaney E."/>
            <person name="Ozersky P."/>
            <person name="Riley A."/>
            <person name="Strowmatt C."/>
            <person name="Wagner-McPherson C."/>
            <person name="Wollam A."/>
            <person name="Yoakum M."/>
            <person name="Bell M."/>
            <person name="Dedhia N."/>
            <person name="Parnell L."/>
            <person name="Shah R."/>
            <person name="Rodriguez M."/>
            <person name="Hoon See L."/>
            <person name="Vil D."/>
            <person name="Baker J."/>
            <person name="Kirchoff K."/>
            <person name="Toth K."/>
            <person name="King L."/>
            <person name="Bahret A."/>
            <person name="Miller B."/>
            <person name="Marra M.A."/>
            <person name="Martienssen R."/>
            <person name="McCombie W.R."/>
            <person name="Wilson R.K."/>
            <person name="Murphy G."/>
            <person name="Bancroft I."/>
            <person name="Volckaert G."/>
            <person name="Wambutt R."/>
            <person name="Duesterhoeft A."/>
            <person name="Stiekema W."/>
            <person name="Pohl T."/>
            <person name="Entian K.-D."/>
            <person name="Terryn N."/>
            <person name="Hartley N."/>
            <person name="Bent E."/>
            <person name="Johnson S."/>
            <person name="Langham S.-A."/>
            <person name="McCullagh B."/>
            <person name="Robben J."/>
            <person name="Grymonprez B."/>
            <person name="Zimmermann W."/>
            <person name="Ramsperger U."/>
            <person name="Wedler H."/>
            <person name="Balke K."/>
            <person name="Wedler E."/>
            <person name="Peters S."/>
            <person name="van Staveren M."/>
            <person name="Dirkse W."/>
            <person name="Mooijman P."/>
            <person name="Klein Lankhorst R."/>
            <person name="Weitzenegger T."/>
            <person name="Bothe G."/>
            <person name="Rose M."/>
            <person name="Hauf J."/>
            <person name="Berneiser S."/>
            <person name="Hempel S."/>
            <person name="Feldpausch M."/>
            <person name="Lamberth S."/>
            <person name="Villarroel R."/>
            <person name="Gielen J."/>
            <person name="Ardiles W."/>
            <person name="Bents O."/>
            <person name="Lemcke K."/>
            <person name="Kolesov G."/>
            <person name="Mayer K.F.X."/>
            <person name="Rudd S."/>
            <person name="Schoof H."/>
            <person name="Schueller C."/>
            <person name="Zaccaria P."/>
            <person name="Mewes H.-W."/>
            <person name="Bevan M."/>
            <person name="Fransz P.F."/>
        </authorList>
    </citation>
    <scope>NUCLEOTIDE SEQUENCE [LARGE SCALE GENOMIC DNA]</scope>
    <source>
        <strain>cv. Columbia</strain>
    </source>
</reference>
<reference key="3">
    <citation type="journal article" date="2017" name="Plant J.">
        <title>Araport11: a complete reannotation of the Arabidopsis thaliana reference genome.</title>
        <authorList>
            <person name="Cheng C.Y."/>
            <person name="Krishnakumar V."/>
            <person name="Chan A.P."/>
            <person name="Thibaud-Nissen F."/>
            <person name="Schobel S."/>
            <person name="Town C.D."/>
        </authorList>
    </citation>
    <scope>GENOME REANNOTATION</scope>
    <source>
        <strain>cv. Columbia</strain>
    </source>
</reference>
<reference key="4">
    <citation type="journal article" date="2003" name="Science">
        <title>Empirical analysis of transcriptional activity in the Arabidopsis genome.</title>
        <authorList>
            <person name="Yamada K."/>
            <person name="Lim J."/>
            <person name="Dale J.M."/>
            <person name="Chen H."/>
            <person name="Shinn P."/>
            <person name="Palm C.J."/>
            <person name="Southwick A.M."/>
            <person name="Wu H.C."/>
            <person name="Kim C.J."/>
            <person name="Nguyen M."/>
            <person name="Pham P.K."/>
            <person name="Cheuk R.F."/>
            <person name="Karlin-Newmann G."/>
            <person name="Liu S.X."/>
            <person name="Lam B."/>
            <person name="Sakano H."/>
            <person name="Wu T."/>
            <person name="Yu G."/>
            <person name="Miranda M."/>
            <person name="Quach H.L."/>
            <person name="Tripp M."/>
            <person name="Chang C.H."/>
            <person name="Lee J.M."/>
            <person name="Toriumi M.J."/>
            <person name="Chan M.M."/>
            <person name="Tang C.C."/>
            <person name="Onodera C.S."/>
            <person name="Deng J.M."/>
            <person name="Akiyama K."/>
            <person name="Ansari Y."/>
            <person name="Arakawa T."/>
            <person name="Banh J."/>
            <person name="Banno F."/>
            <person name="Bowser L."/>
            <person name="Brooks S.Y."/>
            <person name="Carninci P."/>
            <person name="Chao Q."/>
            <person name="Choy N."/>
            <person name="Enju A."/>
            <person name="Goldsmith A.D."/>
            <person name="Gurjal M."/>
            <person name="Hansen N.F."/>
            <person name="Hayashizaki Y."/>
            <person name="Johnson-Hopson C."/>
            <person name="Hsuan V.W."/>
            <person name="Iida K."/>
            <person name="Karnes M."/>
            <person name="Khan S."/>
            <person name="Koesema E."/>
            <person name="Ishida J."/>
            <person name="Jiang P.X."/>
            <person name="Jones T."/>
            <person name="Kawai J."/>
            <person name="Kamiya A."/>
            <person name="Meyers C."/>
            <person name="Nakajima M."/>
            <person name="Narusaka M."/>
            <person name="Seki M."/>
            <person name="Sakurai T."/>
            <person name="Satou M."/>
            <person name="Tamse R."/>
            <person name="Vaysberg M."/>
            <person name="Wallender E.K."/>
            <person name="Wong C."/>
            <person name="Yamamura Y."/>
            <person name="Yuan S."/>
            <person name="Shinozaki K."/>
            <person name="Davis R.W."/>
            <person name="Theologis A."/>
            <person name="Ecker J.R."/>
        </authorList>
    </citation>
    <scope>NUCLEOTIDE SEQUENCE [LARGE SCALE MRNA]</scope>
    <source>
        <strain>cv. Columbia</strain>
    </source>
</reference>
<reference key="5">
    <citation type="submission" date="2005-03" db="EMBL/GenBank/DDBJ databases">
        <title>Large-scale analysis of RIKEN Arabidopsis full-length (RAFL) cDNAs.</title>
        <authorList>
            <person name="Totoki Y."/>
            <person name="Seki M."/>
            <person name="Ishida J."/>
            <person name="Nakajima M."/>
            <person name="Enju A."/>
            <person name="Kamiya A."/>
            <person name="Narusaka M."/>
            <person name="Shin-i T."/>
            <person name="Nakagawa M."/>
            <person name="Sakamoto N."/>
            <person name="Oishi K."/>
            <person name="Kohara Y."/>
            <person name="Kobayashi M."/>
            <person name="Toyoda A."/>
            <person name="Sakaki Y."/>
            <person name="Sakurai T."/>
            <person name="Iida K."/>
            <person name="Akiyama K."/>
            <person name="Satou M."/>
            <person name="Toyoda T."/>
            <person name="Konagaya A."/>
            <person name="Carninci P."/>
            <person name="Kawai J."/>
            <person name="Hayashizaki Y."/>
            <person name="Shinozaki K."/>
        </authorList>
    </citation>
    <scope>NUCLEOTIDE SEQUENCE [LARGE SCALE MRNA] OF 285-392</scope>
    <source>
        <strain>cv. Columbia</strain>
    </source>
</reference>
<reference key="6">
    <citation type="journal article" date="1998" name="Mol. Gen. Genet.">
        <title>A conserved BURP domain defines a novel group of plant proteins with unusual primary structures.</title>
        <authorList>
            <person name="Hattori J."/>
            <person name="Boutilier K.A."/>
            <person name="van Lookeren Campagne M.M."/>
            <person name="Miki B.L."/>
        </authorList>
    </citation>
    <scope>DOMAIN</scope>
</reference>
<reference key="7">
    <citation type="journal article" date="2009" name="Plant Mol. Biol.">
        <title>The BURP domain protein AtUSPL1 of Arabidopsis thaliana is destined to the protein storage vacuoles and overexpression of the cognate gene distorts seed development.</title>
        <authorList>
            <person name="Van Son L."/>
            <person name="Tiedemann J."/>
            <person name="Rutten T."/>
            <person name="Hillmer S."/>
            <person name="Hinz G."/>
            <person name="Zank T."/>
            <person name="Manteuffel R."/>
            <person name="Baeumlein H."/>
        </authorList>
    </citation>
    <scope>GENE FAMILY</scope>
    <scope>NOMENCLATURE</scope>
</reference>
<reference key="8">
    <citation type="journal article" date="2014" name="PLoS ONE">
        <title>AtRD22 and AtUSPL1, members of the plant-specific BURP domain family involved in Arabidopsis thaliana drought tolerance.</title>
        <authorList>
            <person name="Harshavardhan V.T."/>
            <person name="Van Son L."/>
            <person name="Seiler C."/>
            <person name="Junker A."/>
            <person name="Weigelt-Fischer K."/>
            <person name="Klukas C."/>
            <person name="Altmann T."/>
            <person name="Sreenivasulu N."/>
            <person name="Baeumlein H."/>
            <person name="Kuhlmann M."/>
        </authorList>
    </citation>
    <scope>FUNCTION</scope>
    <scope>TISSUE SPECIFICITY</scope>
    <scope>INDUCTION</scope>
    <scope>DISRUPTION PHENOTYPE</scope>
    <source>
        <strain>cv. Columbia</strain>
    </source>
</reference>
<reference key="9">
    <citation type="journal article" date="2015" name="Front. Plant Sci.">
        <title>AtPGL3 is an Arabidopsis BURP domain protein that is localized to the cell wall and promotes cell enlargement.</title>
        <authorList>
            <person name="Park J."/>
            <person name="Cui Y."/>
            <person name="Kang B.H."/>
        </authorList>
    </citation>
    <scope>GENE FAMILY</scope>
    <scope>NOMENCLATURE</scope>
</reference>
<dbReference type="EMBL" id="D10703">
    <property type="protein sequence ID" value="BAA01546.1"/>
    <property type="molecule type" value="Genomic_DNA"/>
</dbReference>
<dbReference type="EMBL" id="AC006601">
    <property type="status" value="NOT_ANNOTATED_CDS"/>
    <property type="molecule type" value="Genomic_DNA"/>
</dbReference>
<dbReference type="EMBL" id="CP002688">
    <property type="protein sequence ID" value="AED93472.1"/>
    <property type="molecule type" value="Genomic_DNA"/>
</dbReference>
<dbReference type="EMBL" id="AY090244">
    <property type="protein sequence ID" value="AAL90908.1"/>
    <property type="molecule type" value="mRNA"/>
</dbReference>
<dbReference type="EMBL" id="AY060560">
    <property type="protein sequence ID" value="AAL31189.1"/>
    <property type="molecule type" value="mRNA"/>
</dbReference>
<dbReference type="EMBL" id="BT009697">
    <property type="protein sequence ID" value="AAP88331.1"/>
    <property type="molecule type" value="mRNA"/>
</dbReference>
<dbReference type="EMBL" id="AK220718">
    <property type="protein sequence ID" value="BAD93841.1"/>
    <property type="status" value="ALT_INIT"/>
    <property type="molecule type" value="mRNA"/>
</dbReference>
<dbReference type="EMBL" id="AK222019">
    <property type="protein sequence ID" value="BAD94687.1"/>
    <property type="status" value="ALT_INIT"/>
    <property type="molecule type" value="mRNA"/>
</dbReference>
<dbReference type="PIR" id="S34823">
    <property type="entry name" value="S34823"/>
</dbReference>
<dbReference type="RefSeq" id="NP_197943.1">
    <property type="nucleotide sequence ID" value="NM_122472.4"/>
</dbReference>
<dbReference type="SMR" id="Q08298"/>
<dbReference type="BioGRID" id="17911">
    <property type="interactions" value="2"/>
</dbReference>
<dbReference type="FunCoup" id="Q08298">
    <property type="interactions" value="226"/>
</dbReference>
<dbReference type="STRING" id="3702.Q08298"/>
<dbReference type="SwissPalm" id="Q08298"/>
<dbReference type="PaxDb" id="3702-AT5G25610.1"/>
<dbReference type="ProteomicsDB" id="225927"/>
<dbReference type="EnsemblPlants" id="AT5G25610.1">
    <property type="protein sequence ID" value="AT5G25610.1"/>
    <property type="gene ID" value="AT5G25610"/>
</dbReference>
<dbReference type="GeneID" id="832636"/>
<dbReference type="Gramene" id="AT5G25610.1">
    <property type="protein sequence ID" value="AT5G25610.1"/>
    <property type="gene ID" value="AT5G25610"/>
</dbReference>
<dbReference type="KEGG" id="ath:AT5G25610"/>
<dbReference type="Araport" id="AT5G25610"/>
<dbReference type="TAIR" id="AT5G25610">
    <property type="gene designation" value="RD22"/>
</dbReference>
<dbReference type="eggNOG" id="ENOG502QQHP">
    <property type="taxonomic scope" value="Eukaryota"/>
</dbReference>
<dbReference type="HOGENOM" id="CLU_011822_1_1_1"/>
<dbReference type="InParanoid" id="Q08298"/>
<dbReference type="OMA" id="NVAPFIY"/>
<dbReference type="PhylomeDB" id="Q08298"/>
<dbReference type="PRO" id="PR:Q08298"/>
<dbReference type="Proteomes" id="UP000006548">
    <property type="component" value="Chromosome 5"/>
</dbReference>
<dbReference type="ExpressionAtlas" id="Q08298">
    <property type="expression patterns" value="baseline and differential"/>
</dbReference>
<dbReference type="GO" id="GO:0005768">
    <property type="term" value="C:endosome"/>
    <property type="evidence" value="ECO:0007005"/>
    <property type="project" value="TAIR"/>
</dbReference>
<dbReference type="GO" id="GO:0005794">
    <property type="term" value="C:Golgi apparatus"/>
    <property type="evidence" value="ECO:0007005"/>
    <property type="project" value="TAIR"/>
</dbReference>
<dbReference type="GO" id="GO:0005802">
    <property type="term" value="C:trans-Golgi network"/>
    <property type="evidence" value="ECO:0007005"/>
    <property type="project" value="TAIR"/>
</dbReference>
<dbReference type="GO" id="GO:0003729">
    <property type="term" value="F:mRNA binding"/>
    <property type="evidence" value="ECO:0000314"/>
    <property type="project" value="TAIR"/>
</dbReference>
<dbReference type="GO" id="GO:0009651">
    <property type="term" value="P:response to salt stress"/>
    <property type="evidence" value="ECO:0000270"/>
    <property type="project" value="TAIR"/>
</dbReference>
<dbReference type="InterPro" id="IPR044816">
    <property type="entry name" value="BURP"/>
</dbReference>
<dbReference type="InterPro" id="IPR004873">
    <property type="entry name" value="BURP_dom"/>
</dbReference>
<dbReference type="PANTHER" id="PTHR31236:SF2">
    <property type="entry name" value="BURP DOMAIN PROTEIN RD22"/>
    <property type="match status" value="1"/>
</dbReference>
<dbReference type="PANTHER" id="PTHR31236">
    <property type="entry name" value="BURP DOMAIN PROTEIN USPL1-LIKE"/>
    <property type="match status" value="1"/>
</dbReference>
<dbReference type="Pfam" id="PF03181">
    <property type="entry name" value="BURP"/>
    <property type="match status" value="1"/>
</dbReference>
<dbReference type="SMART" id="SM01045">
    <property type="entry name" value="BURP"/>
    <property type="match status" value="1"/>
</dbReference>
<dbReference type="PROSITE" id="PS51277">
    <property type="entry name" value="BURP"/>
    <property type="match status" value="1"/>
</dbReference>
<gene>
    <name evidence="7" type="primary">RD22</name>
    <name evidence="11" type="ordered locus">At5g25610</name>
    <name evidence="12" type="ORF">T14C9.150</name>
</gene>
<name>RD22_ARATH</name>
<feature type="signal peptide" evidence="1">
    <location>
        <begin position="1"/>
        <end position="22"/>
    </location>
</feature>
<feature type="chain" id="PRO_0000022202" description="BURP domain protein RD22">
    <location>
        <begin position="23"/>
        <end position="392"/>
    </location>
</feature>
<feature type="repeat" description="TXV 1" evidence="9">
    <location>
        <begin position="56"/>
        <end position="58"/>
    </location>
</feature>
<feature type="repeat" description="TXV 2" evidence="9">
    <location>
        <begin position="78"/>
        <end position="80"/>
    </location>
</feature>
<feature type="repeat" description="TXV 3" evidence="9">
    <location>
        <begin position="100"/>
        <end position="102"/>
    </location>
</feature>
<feature type="repeat" description="TXV 4" evidence="9">
    <location>
        <begin position="125"/>
        <end position="127"/>
    </location>
</feature>
<feature type="domain" description="BURP" evidence="2">
    <location>
        <begin position="176"/>
        <end position="392"/>
    </location>
</feature>
<feature type="region of interest" description="5 X approximate repeats">
    <location>
        <begin position="57"/>
        <end position="164"/>
    </location>
</feature>
<feature type="region of interest" description="Disordered" evidence="3">
    <location>
        <begin position="61"/>
        <end position="136"/>
    </location>
</feature>
<feature type="compositionally biased region" description="Gly residues" evidence="3">
    <location>
        <begin position="94"/>
        <end position="114"/>
    </location>
</feature>
<comment type="function">
    <text evidence="4">Acts to suppress chlorophyll degradation under moisture stress.</text>
</comment>
<comment type="tissue specificity">
    <text evidence="5 10">Expressed in seed (PubMed:8479424). Highest expression in leaves and guard cells (PubMed:25333723).</text>
</comment>
<comment type="developmental stage">
    <text evidence="5 10">Expressed during the early and middle stages of seed development (PubMed:8479424). Abundant throughout plant development in the aerial part of the plant (PubMed:25333723).</text>
</comment>
<comment type="induction">
    <text evidence="4 5">Up-regulated by dehydration, salt stress and abscisic acid (ABA). Not regulated by cold.</text>
</comment>
<comment type="domain">
    <text evidence="6">The BURP domain located at the C-terminus has not been identified in non-plant proteins.</text>
</comment>
<comment type="disruption phenotype">
    <text evidence="4">Enhanced drought tolerance.</text>
</comment>
<comment type="sequence caution" evidence="9">
    <conflict type="erroneous initiation">
        <sequence resource="EMBL-CDS" id="BAD93841"/>
    </conflict>
    <text>Truncated N-terminus.</text>
</comment>
<comment type="sequence caution" evidence="9">
    <conflict type="erroneous initiation">
        <sequence resource="EMBL-CDS" id="BAD94687"/>
    </conflict>
    <text>Truncated N-terminus.</text>
</comment>